<organism>
    <name type="scientific">Komagataella phaffii (strain GS115 / ATCC 20864)</name>
    <name type="common">Yeast</name>
    <name type="synonym">Pichia pastoris</name>
    <dbReference type="NCBI Taxonomy" id="644223"/>
    <lineage>
        <taxon>Eukaryota</taxon>
        <taxon>Fungi</taxon>
        <taxon>Dikarya</taxon>
        <taxon>Ascomycota</taxon>
        <taxon>Saccharomycotina</taxon>
        <taxon>Pichiomycetes</taxon>
        <taxon>Pichiales</taxon>
        <taxon>Pichiaceae</taxon>
        <taxon>Komagataella</taxon>
    </lineage>
</organism>
<dbReference type="EC" id="6.3.4.4" evidence="2"/>
<dbReference type="EMBL" id="FN392322">
    <property type="protein sequence ID" value="CAY71873.1"/>
    <property type="molecule type" value="Genomic_DNA"/>
</dbReference>
<dbReference type="RefSeq" id="XP_002494052.1">
    <property type="nucleotide sequence ID" value="XM_002494007.1"/>
</dbReference>
<dbReference type="SMR" id="C4R8E8"/>
<dbReference type="FunCoup" id="C4R8E8">
    <property type="interactions" value="814"/>
</dbReference>
<dbReference type="STRING" id="644223.C4R8E8"/>
<dbReference type="EnsemblFungi" id="CAY71873">
    <property type="protein sequence ID" value="CAY71873"/>
    <property type="gene ID" value="PAS_chr4_0613"/>
</dbReference>
<dbReference type="GeneID" id="8201288"/>
<dbReference type="KEGG" id="ppa:PAS_chr4_0613"/>
<dbReference type="eggNOG" id="KOG1355">
    <property type="taxonomic scope" value="Eukaryota"/>
</dbReference>
<dbReference type="HOGENOM" id="CLU_029848_3_0_1"/>
<dbReference type="InParanoid" id="C4R8E8"/>
<dbReference type="OMA" id="FHHAKPI"/>
<dbReference type="OrthoDB" id="10265645at2759"/>
<dbReference type="UniPathway" id="UPA00075">
    <property type="reaction ID" value="UER00335"/>
</dbReference>
<dbReference type="Proteomes" id="UP000000314">
    <property type="component" value="Chromosome 4"/>
</dbReference>
<dbReference type="GO" id="GO:0005737">
    <property type="term" value="C:cytoplasm"/>
    <property type="evidence" value="ECO:0007669"/>
    <property type="project" value="UniProtKB-SubCell"/>
</dbReference>
<dbReference type="GO" id="GO:0004019">
    <property type="term" value="F:adenylosuccinate synthase activity"/>
    <property type="evidence" value="ECO:0007669"/>
    <property type="project" value="UniProtKB-UniRule"/>
</dbReference>
<dbReference type="GO" id="GO:0005525">
    <property type="term" value="F:GTP binding"/>
    <property type="evidence" value="ECO:0007669"/>
    <property type="project" value="UniProtKB-UniRule"/>
</dbReference>
<dbReference type="GO" id="GO:0000287">
    <property type="term" value="F:magnesium ion binding"/>
    <property type="evidence" value="ECO:0007669"/>
    <property type="project" value="UniProtKB-UniRule"/>
</dbReference>
<dbReference type="GO" id="GO:0044208">
    <property type="term" value="P:'de novo' AMP biosynthetic process"/>
    <property type="evidence" value="ECO:0007669"/>
    <property type="project" value="UniProtKB-UniRule"/>
</dbReference>
<dbReference type="GO" id="GO:0046040">
    <property type="term" value="P:IMP metabolic process"/>
    <property type="evidence" value="ECO:0007669"/>
    <property type="project" value="TreeGrafter"/>
</dbReference>
<dbReference type="CDD" id="cd03108">
    <property type="entry name" value="AdSS"/>
    <property type="match status" value="1"/>
</dbReference>
<dbReference type="FunFam" id="3.90.170.10:FF:000001">
    <property type="entry name" value="Adenylosuccinate synthetase"/>
    <property type="match status" value="1"/>
</dbReference>
<dbReference type="FunFam" id="1.10.300.10:FF:000002">
    <property type="entry name" value="Adenylosuccinate synthetase, chloroplastic"/>
    <property type="match status" value="1"/>
</dbReference>
<dbReference type="Gene3D" id="3.40.440.10">
    <property type="entry name" value="Adenylosuccinate Synthetase, subunit A, domain 1"/>
    <property type="match status" value="1"/>
</dbReference>
<dbReference type="Gene3D" id="1.10.300.10">
    <property type="entry name" value="Adenylosuccinate Synthetase, subunit A, domain 2"/>
    <property type="match status" value="1"/>
</dbReference>
<dbReference type="Gene3D" id="3.90.170.10">
    <property type="entry name" value="Adenylosuccinate Synthetase, subunit A, domain 3"/>
    <property type="match status" value="1"/>
</dbReference>
<dbReference type="HAMAP" id="MF_00011">
    <property type="entry name" value="Adenylosucc_synth"/>
    <property type="match status" value="1"/>
</dbReference>
<dbReference type="InterPro" id="IPR018220">
    <property type="entry name" value="Adenylosuccin_syn_GTP-bd"/>
</dbReference>
<dbReference type="InterPro" id="IPR033128">
    <property type="entry name" value="Adenylosuccin_syn_Lys_AS"/>
</dbReference>
<dbReference type="InterPro" id="IPR042109">
    <property type="entry name" value="Adenylosuccinate_synth_dom1"/>
</dbReference>
<dbReference type="InterPro" id="IPR042110">
    <property type="entry name" value="Adenylosuccinate_synth_dom2"/>
</dbReference>
<dbReference type="InterPro" id="IPR042111">
    <property type="entry name" value="Adenylosuccinate_synth_dom3"/>
</dbReference>
<dbReference type="InterPro" id="IPR001114">
    <property type="entry name" value="Adenylosuccinate_synthetase"/>
</dbReference>
<dbReference type="InterPro" id="IPR027417">
    <property type="entry name" value="P-loop_NTPase"/>
</dbReference>
<dbReference type="NCBIfam" id="NF002223">
    <property type="entry name" value="PRK01117.1"/>
    <property type="match status" value="1"/>
</dbReference>
<dbReference type="NCBIfam" id="TIGR00184">
    <property type="entry name" value="purA"/>
    <property type="match status" value="1"/>
</dbReference>
<dbReference type="PANTHER" id="PTHR11846">
    <property type="entry name" value="ADENYLOSUCCINATE SYNTHETASE"/>
    <property type="match status" value="1"/>
</dbReference>
<dbReference type="PANTHER" id="PTHR11846:SF0">
    <property type="entry name" value="ADENYLOSUCCINATE SYNTHETASE"/>
    <property type="match status" value="1"/>
</dbReference>
<dbReference type="Pfam" id="PF00709">
    <property type="entry name" value="Adenylsucc_synt"/>
    <property type="match status" value="1"/>
</dbReference>
<dbReference type="SMART" id="SM00788">
    <property type="entry name" value="Adenylsucc_synt"/>
    <property type="match status" value="1"/>
</dbReference>
<dbReference type="SUPFAM" id="SSF52540">
    <property type="entry name" value="P-loop containing nucleoside triphosphate hydrolases"/>
    <property type="match status" value="1"/>
</dbReference>
<dbReference type="PROSITE" id="PS01266">
    <property type="entry name" value="ADENYLOSUCCIN_SYN_1"/>
    <property type="match status" value="1"/>
</dbReference>
<dbReference type="PROSITE" id="PS00513">
    <property type="entry name" value="ADENYLOSUCCIN_SYN_2"/>
    <property type="match status" value="1"/>
</dbReference>
<protein>
    <recommendedName>
        <fullName evidence="2">Adenylosuccinate synthetase</fullName>
        <shortName evidence="2">AMPSase</shortName>
        <shortName evidence="2">AdSS</shortName>
        <ecNumber evidence="2">6.3.4.4</ecNumber>
    </recommendedName>
    <alternativeName>
        <fullName evidence="2">IMP--aspartate ligase</fullName>
    </alternativeName>
</protein>
<gene>
    <name type="ordered locus">PAS_chr4_0613</name>
</gene>
<keyword id="KW-0963">Cytoplasm</keyword>
<keyword id="KW-0342">GTP-binding</keyword>
<keyword id="KW-0436">Ligase</keyword>
<keyword id="KW-0460">Magnesium</keyword>
<keyword id="KW-0479">Metal-binding</keyword>
<keyword id="KW-0547">Nucleotide-binding</keyword>
<keyword id="KW-0658">Purine biosynthesis</keyword>
<keyword id="KW-1185">Reference proteome</keyword>
<sequence length="428" mass="47768">MADVVLGSQWGDEGKGKLVDVLCEDIDVCARCQGGNNAGHTIIVKGVKFDFHMLPSGLVNPKCKNLIGSGVVIHLPSFFEELEAIENKGLDCTGRLFVSSRAHLVFGFHQRTDKLKEAELHETKKSIGTTGKGIGPTYSTKASRSGIRVHHLVSDEPDSWKEFETRLSRLIETRKKRYGHFDCDLESELAKYKVLREKIKPFVVDSIEFMHDAIKDKKKILVEGANALMLDIDFGTYPYVTSSNTGIGGVLTGLGIPPKAINNIYGVVKAYTTRVGEGPFPTEQLNEDGEKLQTIGCEYGVTTGRKRRCGWLDLVVLKYSTLINGYTSLNITKLDVLDTFKEIKIGVSYTYQGKRVTTFPEDLHALGKVDVEYVTFPGWEEDITQIKNYEDLPANAKKYLEFIEEYVEVPIQWVGTGPGRESMLEKNI</sequence>
<name>PURA_KOMPG</name>
<feature type="chain" id="PRO_0000399355" description="Adenylosuccinate synthetase">
    <location>
        <begin position="1"/>
        <end position="428"/>
    </location>
</feature>
<feature type="active site" description="Proton acceptor" evidence="2">
    <location>
        <position position="12"/>
    </location>
</feature>
<feature type="active site" description="Proton donor" evidence="2">
    <location>
        <position position="40"/>
    </location>
</feature>
<feature type="binding site" evidence="2">
    <location>
        <begin position="11"/>
        <end position="17"/>
    </location>
    <ligand>
        <name>GTP</name>
        <dbReference type="ChEBI" id="CHEBI:37565"/>
    </ligand>
</feature>
<feature type="binding site" description="in other chain" evidence="2">
    <location>
        <begin position="12"/>
        <end position="15"/>
    </location>
    <ligand>
        <name>IMP</name>
        <dbReference type="ChEBI" id="CHEBI:58053"/>
        <note>ligand shared between dimeric partners</note>
    </ligand>
</feature>
<feature type="binding site" evidence="2">
    <location>
        <position position="12"/>
    </location>
    <ligand>
        <name>Mg(2+)</name>
        <dbReference type="ChEBI" id="CHEBI:18420"/>
    </ligand>
</feature>
<feature type="binding site" description="in other chain" evidence="2">
    <location>
        <begin position="37"/>
        <end position="40"/>
    </location>
    <ligand>
        <name>IMP</name>
        <dbReference type="ChEBI" id="CHEBI:58053"/>
        <note>ligand shared between dimeric partners</note>
    </ligand>
</feature>
<feature type="binding site" evidence="2">
    <location>
        <begin position="39"/>
        <end position="41"/>
    </location>
    <ligand>
        <name>GTP</name>
        <dbReference type="ChEBI" id="CHEBI:37565"/>
    </ligand>
</feature>
<feature type="binding site" evidence="2">
    <location>
        <position position="39"/>
    </location>
    <ligand>
        <name>Mg(2+)</name>
        <dbReference type="ChEBI" id="CHEBI:18420"/>
    </ligand>
</feature>
<feature type="binding site" description="in other chain" evidence="2">
    <location>
        <position position="130"/>
    </location>
    <ligand>
        <name>IMP</name>
        <dbReference type="ChEBI" id="CHEBI:58053"/>
        <note>ligand shared between dimeric partners</note>
    </ligand>
</feature>
<feature type="binding site" evidence="2">
    <location>
        <position position="144"/>
    </location>
    <ligand>
        <name>IMP</name>
        <dbReference type="ChEBI" id="CHEBI:58053"/>
        <note>ligand shared between dimeric partners</note>
    </ligand>
</feature>
<feature type="binding site" description="in other chain" evidence="2">
    <location>
        <position position="226"/>
    </location>
    <ligand>
        <name>IMP</name>
        <dbReference type="ChEBI" id="CHEBI:58053"/>
        <note>ligand shared between dimeric partners</note>
    </ligand>
</feature>
<feature type="binding site" description="in other chain" evidence="2">
    <location>
        <position position="241"/>
    </location>
    <ligand>
        <name>IMP</name>
        <dbReference type="ChEBI" id="CHEBI:58053"/>
        <note>ligand shared between dimeric partners</note>
    </ligand>
</feature>
<feature type="binding site" evidence="2">
    <location>
        <begin position="301"/>
        <end position="307"/>
    </location>
    <ligand>
        <name>substrate</name>
    </ligand>
</feature>
<feature type="binding site" description="in other chain" evidence="2">
    <location>
        <position position="305"/>
    </location>
    <ligand>
        <name>IMP</name>
        <dbReference type="ChEBI" id="CHEBI:58053"/>
        <note>ligand shared between dimeric partners</note>
    </ligand>
</feature>
<feature type="binding site" evidence="2">
    <location>
        <position position="307"/>
    </location>
    <ligand>
        <name>GTP</name>
        <dbReference type="ChEBI" id="CHEBI:37565"/>
    </ligand>
</feature>
<feature type="binding site" evidence="2">
    <location>
        <begin position="333"/>
        <end position="335"/>
    </location>
    <ligand>
        <name>GTP</name>
        <dbReference type="ChEBI" id="CHEBI:37565"/>
    </ligand>
</feature>
<feature type="binding site" evidence="2">
    <location>
        <begin position="415"/>
        <end position="417"/>
    </location>
    <ligand>
        <name>GTP</name>
        <dbReference type="ChEBI" id="CHEBI:37565"/>
    </ligand>
</feature>
<proteinExistence type="inferred from homology"/>
<evidence type="ECO:0000250" key="1"/>
<evidence type="ECO:0000255" key="2">
    <source>
        <dbReference type="HAMAP-Rule" id="MF_03125"/>
    </source>
</evidence>
<comment type="function">
    <text evidence="1">Plays an important role in the de novo pathway and in the salvage pathway of purine nucleotide biosynthesis. Catalyzes the first committed step in the biosynthesis of AMP from IMP (By similarity).</text>
</comment>
<comment type="catalytic activity">
    <reaction evidence="2">
        <text>IMP + L-aspartate + GTP = N(6)-(1,2-dicarboxyethyl)-AMP + GDP + phosphate + 2 H(+)</text>
        <dbReference type="Rhea" id="RHEA:15753"/>
        <dbReference type="ChEBI" id="CHEBI:15378"/>
        <dbReference type="ChEBI" id="CHEBI:29991"/>
        <dbReference type="ChEBI" id="CHEBI:37565"/>
        <dbReference type="ChEBI" id="CHEBI:43474"/>
        <dbReference type="ChEBI" id="CHEBI:57567"/>
        <dbReference type="ChEBI" id="CHEBI:58053"/>
        <dbReference type="ChEBI" id="CHEBI:58189"/>
        <dbReference type="EC" id="6.3.4.4"/>
    </reaction>
</comment>
<comment type="cofactor">
    <cofactor evidence="2">
        <name>Mg(2+)</name>
        <dbReference type="ChEBI" id="CHEBI:18420"/>
    </cofactor>
    <text evidence="2">Binds 1 Mg(2+) ion per subunit.</text>
</comment>
<comment type="pathway">
    <text evidence="2">Purine metabolism; AMP biosynthesis via de novo pathway; AMP from IMP: step 1/2.</text>
</comment>
<comment type="subunit">
    <text evidence="2">Homodimer.</text>
</comment>
<comment type="subcellular location">
    <subcellularLocation>
        <location evidence="2">Cytoplasm</location>
    </subcellularLocation>
</comment>
<comment type="similarity">
    <text evidence="2">Belongs to the adenylosuccinate synthetase family.</text>
</comment>
<accession>C4R8E8</accession>
<reference key="1">
    <citation type="journal article" date="2009" name="Nat. Biotechnol.">
        <title>Genome sequence of the recombinant protein production host Pichia pastoris.</title>
        <authorList>
            <person name="De Schutter K."/>
            <person name="Lin Y.-C."/>
            <person name="Tiels P."/>
            <person name="Van Hecke A."/>
            <person name="Glinka S."/>
            <person name="Weber-Lehmann J."/>
            <person name="Rouze P."/>
            <person name="Van de Peer Y."/>
            <person name="Callewaert N."/>
        </authorList>
    </citation>
    <scope>NUCLEOTIDE SEQUENCE [LARGE SCALE GENOMIC DNA]</scope>
    <source>
        <strain>GS115 / ATCC 20864</strain>
    </source>
</reference>